<gene>
    <name evidence="1" type="primary">gltX</name>
    <name type="ordered locus">NE1624</name>
</gene>
<sequence length="463" mass="52887">MVKTRFAPSPTGYLHIGGARTALFSWAFARKQGGKFVLRIEDTDLERSTQQSVQAILDGMAWLGLDYDEGPYYQMQRLNRYQEVAEQLLTQGLAYQCYASREELDALREQQRLAGLKPRYDGRWRDSRQTPPAGVKPVVRLKTPQHGYVVFDDLVKGKISVANHELDDLVLLRSDGTPTYNFGVVLDDLDMGITHVIRGDDHVNNTPRQINILKALGAAIPQYAHVPMILGADGERLSKRHGAVSVMHYRDQGYLPEALINYLARLGWSHGDEEIFSREQLVEWFDLAAISRSPAKFNPEKLTWLNQHYLKMADDARLVELVMPFLLERNYPLPATENLLKIVNLLKDRASTIEELADASAYFFRTIEPPEELRTQYFTAEIRPVLEYLVDRLAQIEWKRETIHHEIKQTVSSHNLKFPSLAMPLRVMVTGEAQTPAIDAVLELLGKEETLHRLRGRMEIFPG</sequence>
<accession>Q82U77</accession>
<reference key="1">
    <citation type="journal article" date="2003" name="J. Bacteriol.">
        <title>Complete genome sequence of the ammonia-oxidizing bacterium and obligate chemolithoautotroph Nitrosomonas europaea.</title>
        <authorList>
            <person name="Chain P."/>
            <person name="Lamerdin J.E."/>
            <person name="Larimer F.W."/>
            <person name="Regala W."/>
            <person name="Lao V."/>
            <person name="Land M.L."/>
            <person name="Hauser L."/>
            <person name="Hooper A.B."/>
            <person name="Klotz M.G."/>
            <person name="Norton J."/>
            <person name="Sayavedra-Soto L.A."/>
            <person name="Arciero D.M."/>
            <person name="Hommes N.G."/>
            <person name="Whittaker M.M."/>
            <person name="Arp D.J."/>
        </authorList>
    </citation>
    <scope>NUCLEOTIDE SEQUENCE [LARGE SCALE GENOMIC DNA]</scope>
    <source>
        <strain>ATCC 19718 / CIP 103999 / KCTC 2705 / NBRC 14298</strain>
    </source>
</reference>
<name>SYE_NITEU</name>
<organism>
    <name type="scientific">Nitrosomonas europaea (strain ATCC 19718 / CIP 103999 / KCTC 2705 / NBRC 14298)</name>
    <dbReference type="NCBI Taxonomy" id="228410"/>
    <lineage>
        <taxon>Bacteria</taxon>
        <taxon>Pseudomonadati</taxon>
        <taxon>Pseudomonadota</taxon>
        <taxon>Betaproteobacteria</taxon>
        <taxon>Nitrosomonadales</taxon>
        <taxon>Nitrosomonadaceae</taxon>
        <taxon>Nitrosomonas</taxon>
    </lineage>
</organism>
<comment type="function">
    <text evidence="1">Catalyzes the attachment of glutamate to tRNA(Glu) in a two-step reaction: glutamate is first activated by ATP to form Glu-AMP and then transferred to the acceptor end of tRNA(Glu).</text>
</comment>
<comment type="catalytic activity">
    <reaction evidence="1">
        <text>tRNA(Glu) + L-glutamate + ATP = L-glutamyl-tRNA(Glu) + AMP + diphosphate</text>
        <dbReference type="Rhea" id="RHEA:23540"/>
        <dbReference type="Rhea" id="RHEA-COMP:9663"/>
        <dbReference type="Rhea" id="RHEA-COMP:9680"/>
        <dbReference type="ChEBI" id="CHEBI:29985"/>
        <dbReference type="ChEBI" id="CHEBI:30616"/>
        <dbReference type="ChEBI" id="CHEBI:33019"/>
        <dbReference type="ChEBI" id="CHEBI:78442"/>
        <dbReference type="ChEBI" id="CHEBI:78520"/>
        <dbReference type="ChEBI" id="CHEBI:456215"/>
        <dbReference type="EC" id="6.1.1.17"/>
    </reaction>
</comment>
<comment type="subunit">
    <text evidence="1">Monomer.</text>
</comment>
<comment type="subcellular location">
    <subcellularLocation>
        <location evidence="1">Cytoplasm</location>
    </subcellularLocation>
</comment>
<comment type="similarity">
    <text evidence="1">Belongs to the class-I aminoacyl-tRNA synthetase family. Glutamate--tRNA ligase type 1 subfamily.</text>
</comment>
<evidence type="ECO:0000255" key="1">
    <source>
        <dbReference type="HAMAP-Rule" id="MF_00022"/>
    </source>
</evidence>
<feature type="chain" id="PRO_0000119614" description="Glutamate--tRNA ligase">
    <location>
        <begin position="1"/>
        <end position="463"/>
    </location>
</feature>
<feature type="short sequence motif" description="'HIGH' region" evidence="1">
    <location>
        <begin position="8"/>
        <end position="18"/>
    </location>
</feature>
<feature type="short sequence motif" description="'KMSKS' region" evidence="1">
    <location>
        <begin position="236"/>
        <end position="240"/>
    </location>
</feature>
<feature type="binding site" evidence="1">
    <location>
        <position position="239"/>
    </location>
    <ligand>
        <name>ATP</name>
        <dbReference type="ChEBI" id="CHEBI:30616"/>
    </ligand>
</feature>
<dbReference type="EC" id="6.1.1.17" evidence="1"/>
<dbReference type="EMBL" id="AL954747">
    <property type="protein sequence ID" value="CAD85535.1"/>
    <property type="molecule type" value="Genomic_DNA"/>
</dbReference>
<dbReference type="RefSeq" id="WP_011112184.1">
    <property type="nucleotide sequence ID" value="NC_004757.1"/>
</dbReference>
<dbReference type="SMR" id="Q82U77"/>
<dbReference type="STRING" id="228410.NE1624"/>
<dbReference type="GeneID" id="87104790"/>
<dbReference type="KEGG" id="neu:NE1624"/>
<dbReference type="eggNOG" id="COG0008">
    <property type="taxonomic scope" value="Bacteria"/>
</dbReference>
<dbReference type="HOGENOM" id="CLU_015768_6_0_4"/>
<dbReference type="OrthoDB" id="9807503at2"/>
<dbReference type="PhylomeDB" id="Q82U77"/>
<dbReference type="Proteomes" id="UP000001416">
    <property type="component" value="Chromosome"/>
</dbReference>
<dbReference type="GO" id="GO:0005829">
    <property type="term" value="C:cytosol"/>
    <property type="evidence" value="ECO:0007669"/>
    <property type="project" value="TreeGrafter"/>
</dbReference>
<dbReference type="GO" id="GO:0005524">
    <property type="term" value="F:ATP binding"/>
    <property type="evidence" value="ECO:0007669"/>
    <property type="project" value="UniProtKB-UniRule"/>
</dbReference>
<dbReference type="GO" id="GO:0004818">
    <property type="term" value="F:glutamate-tRNA ligase activity"/>
    <property type="evidence" value="ECO:0007669"/>
    <property type="project" value="UniProtKB-UniRule"/>
</dbReference>
<dbReference type="GO" id="GO:0000049">
    <property type="term" value="F:tRNA binding"/>
    <property type="evidence" value="ECO:0007669"/>
    <property type="project" value="InterPro"/>
</dbReference>
<dbReference type="GO" id="GO:0008270">
    <property type="term" value="F:zinc ion binding"/>
    <property type="evidence" value="ECO:0007669"/>
    <property type="project" value="InterPro"/>
</dbReference>
<dbReference type="GO" id="GO:0006424">
    <property type="term" value="P:glutamyl-tRNA aminoacylation"/>
    <property type="evidence" value="ECO:0007669"/>
    <property type="project" value="UniProtKB-UniRule"/>
</dbReference>
<dbReference type="CDD" id="cd00808">
    <property type="entry name" value="GluRS_core"/>
    <property type="match status" value="1"/>
</dbReference>
<dbReference type="FunFam" id="3.40.50.620:FF:000007">
    <property type="entry name" value="Glutamate--tRNA ligase"/>
    <property type="match status" value="1"/>
</dbReference>
<dbReference type="Gene3D" id="1.10.10.350">
    <property type="match status" value="1"/>
</dbReference>
<dbReference type="Gene3D" id="1.10.8.70">
    <property type="entry name" value="Glutamate-tRNA synthetase, class I, anticodon-binding domain 1"/>
    <property type="match status" value="1"/>
</dbReference>
<dbReference type="Gene3D" id="3.40.50.620">
    <property type="entry name" value="HUPs"/>
    <property type="match status" value="1"/>
</dbReference>
<dbReference type="HAMAP" id="MF_00022">
    <property type="entry name" value="Glu_tRNA_synth_type1"/>
    <property type="match status" value="1"/>
</dbReference>
<dbReference type="InterPro" id="IPR045462">
    <property type="entry name" value="aa-tRNA-synth_I_cd-bd"/>
</dbReference>
<dbReference type="InterPro" id="IPR020751">
    <property type="entry name" value="aa-tRNA-synth_I_codon-bd_sub2"/>
</dbReference>
<dbReference type="InterPro" id="IPR001412">
    <property type="entry name" value="aa-tRNA-synth_I_CS"/>
</dbReference>
<dbReference type="InterPro" id="IPR008925">
    <property type="entry name" value="aa_tRNA-synth_I_cd-bd_sf"/>
</dbReference>
<dbReference type="InterPro" id="IPR004527">
    <property type="entry name" value="Glu-tRNA-ligase_bac/mito"/>
</dbReference>
<dbReference type="InterPro" id="IPR020752">
    <property type="entry name" value="Glu-tRNA-synth_I_codon-bd_sub1"/>
</dbReference>
<dbReference type="InterPro" id="IPR000924">
    <property type="entry name" value="Glu/Gln-tRNA-synth"/>
</dbReference>
<dbReference type="InterPro" id="IPR020058">
    <property type="entry name" value="Glu/Gln-tRNA-synth_Ib_cat-dom"/>
</dbReference>
<dbReference type="InterPro" id="IPR049940">
    <property type="entry name" value="GluQ/Sye"/>
</dbReference>
<dbReference type="InterPro" id="IPR033910">
    <property type="entry name" value="GluRS_core"/>
</dbReference>
<dbReference type="InterPro" id="IPR014729">
    <property type="entry name" value="Rossmann-like_a/b/a_fold"/>
</dbReference>
<dbReference type="NCBIfam" id="TIGR00464">
    <property type="entry name" value="gltX_bact"/>
    <property type="match status" value="1"/>
</dbReference>
<dbReference type="PANTHER" id="PTHR43311">
    <property type="entry name" value="GLUTAMATE--TRNA LIGASE"/>
    <property type="match status" value="1"/>
</dbReference>
<dbReference type="PANTHER" id="PTHR43311:SF2">
    <property type="entry name" value="GLUTAMATE--TRNA LIGASE, MITOCHONDRIAL-RELATED"/>
    <property type="match status" value="1"/>
</dbReference>
<dbReference type="Pfam" id="PF19269">
    <property type="entry name" value="Anticodon_2"/>
    <property type="match status" value="1"/>
</dbReference>
<dbReference type="Pfam" id="PF00749">
    <property type="entry name" value="tRNA-synt_1c"/>
    <property type="match status" value="1"/>
</dbReference>
<dbReference type="PRINTS" id="PR00987">
    <property type="entry name" value="TRNASYNTHGLU"/>
</dbReference>
<dbReference type="SUPFAM" id="SSF48163">
    <property type="entry name" value="An anticodon-binding domain of class I aminoacyl-tRNA synthetases"/>
    <property type="match status" value="1"/>
</dbReference>
<dbReference type="SUPFAM" id="SSF52374">
    <property type="entry name" value="Nucleotidylyl transferase"/>
    <property type="match status" value="1"/>
</dbReference>
<dbReference type="PROSITE" id="PS00178">
    <property type="entry name" value="AA_TRNA_LIGASE_I"/>
    <property type="match status" value="1"/>
</dbReference>
<keyword id="KW-0030">Aminoacyl-tRNA synthetase</keyword>
<keyword id="KW-0067">ATP-binding</keyword>
<keyword id="KW-0963">Cytoplasm</keyword>
<keyword id="KW-0436">Ligase</keyword>
<keyword id="KW-0547">Nucleotide-binding</keyword>
<keyword id="KW-0648">Protein biosynthesis</keyword>
<keyword id="KW-1185">Reference proteome</keyword>
<protein>
    <recommendedName>
        <fullName evidence="1">Glutamate--tRNA ligase</fullName>
        <ecNumber evidence="1">6.1.1.17</ecNumber>
    </recommendedName>
    <alternativeName>
        <fullName evidence="1">Glutamyl-tRNA synthetase</fullName>
        <shortName evidence="1">GluRS</shortName>
    </alternativeName>
</protein>
<proteinExistence type="inferred from homology"/>